<accession>Q8MEX3</accession>
<sequence>MCYFISKKKGLGGFFLKKNENIRWQQHFLYPLLFHNDFYVIDPNLLFNSSPSFEKIEKLPNSFRFLNVKRSIKLLHQQNYLVYNTRSSCFNFIGKTFFFCFDIFVSTWWKHFFGFKVTFKEINQQVNFQSVFSLFLFLEEVFMFSLSFSNIRIPSSIHSELLIRRFKFSIQDVSFLHFLSFILFSKQFKFVNNSIIFPRGNVIFCFFLGNILLSIFEDFFTLRWKSCFHEKSLSYGLFSEQKHFQQKWNFLTRKPKKKDTIRLLKDFFFHYIRYGEKLILLGTTILVKKCEFFFLNFWQTYLFVLSEPSSFFLKQISSQNIFFLAYYLEYPTNSFLLRLNILDYFLSTDFVGRELNSKLSAVFVIQFLSKEGLCDIMGNPKSKLAWLSFTDNSILDKYDHFCRNVDSFYSEAINKRFLDRVKDILFLSCIKTLACKHKSTIRIVRKELGFELRKIFVRKQVEFKNKKLLYFCFHKQFRKLLFKIDLVTERLWFLDILEVNNFTKFWVKQQNALDFFFIFDQNIWFMLDQFL</sequence>
<feature type="chain" id="PRO_0000143373" description="Maturase K">
    <location>
        <begin position="1"/>
        <end position="531"/>
    </location>
</feature>
<evidence type="ECO:0000255" key="1">
    <source>
        <dbReference type="HAMAP-Rule" id="MF_01390"/>
    </source>
</evidence>
<evidence type="ECO:0000305" key="2"/>
<organism>
    <name type="scientific">Ephedra sinica</name>
    <name type="common">Chinese ephedra</name>
    <name type="synonym">Ma huang</name>
    <dbReference type="NCBI Taxonomy" id="33152"/>
    <lineage>
        <taxon>Eukaryota</taxon>
        <taxon>Viridiplantae</taxon>
        <taxon>Streptophyta</taxon>
        <taxon>Embryophyta</taxon>
        <taxon>Tracheophyta</taxon>
        <taxon>Spermatophyta</taxon>
        <taxon>Gnetopsida</taxon>
        <taxon>Gnetidae</taxon>
        <taxon>Ephedrales</taxon>
        <taxon>Ephedraceae</taxon>
        <taxon>Ephedra</taxon>
    </lineage>
</organism>
<keyword id="KW-0150">Chloroplast</keyword>
<keyword id="KW-0507">mRNA processing</keyword>
<keyword id="KW-0934">Plastid</keyword>
<keyword id="KW-0694">RNA-binding</keyword>
<keyword id="KW-0819">tRNA processing</keyword>
<reference key="1">
    <citation type="submission" date="2000-06" db="EMBL/GenBank/DDBJ databases">
        <title>Chloroplast matK sequence data reconfirm the monophyly of extant gymnosperms and the coniferophytic origin of Gnetales.</title>
        <authorList>
            <person name="Chaw S.-M."/>
            <person name="Hu S.-H."/>
        </authorList>
    </citation>
    <scope>NUCLEOTIDE SEQUENCE [GENOMIC DNA]</scope>
</reference>
<name>MATK_EPHSI</name>
<protein>
    <recommendedName>
        <fullName evidence="1">Maturase K</fullName>
    </recommendedName>
    <alternativeName>
        <fullName evidence="1">Intron maturase</fullName>
    </alternativeName>
</protein>
<dbReference type="EMBL" id="AF279805">
    <property type="protein sequence ID" value="AAK69128.1"/>
    <property type="status" value="ALT_INIT"/>
    <property type="molecule type" value="Genomic_DNA"/>
</dbReference>
<dbReference type="GO" id="GO:0009507">
    <property type="term" value="C:chloroplast"/>
    <property type="evidence" value="ECO:0007669"/>
    <property type="project" value="UniProtKB-SubCell"/>
</dbReference>
<dbReference type="GO" id="GO:0003723">
    <property type="term" value="F:RNA binding"/>
    <property type="evidence" value="ECO:0007669"/>
    <property type="project" value="UniProtKB-KW"/>
</dbReference>
<dbReference type="GO" id="GO:0006397">
    <property type="term" value="P:mRNA processing"/>
    <property type="evidence" value="ECO:0007669"/>
    <property type="project" value="UniProtKB-KW"/>
</dbReference>
<dbReference type="GO" id="GO:0008380">
    <property type="term" value="P:RNA splicing"/>
    <property type="evidence" value="ECO:0007669"/>
    <property type="project" value="UniProtKB-UniRule"/>
</dbReference>
<dbReference type="GO" id="GO:0008033">
    <property type="term" value="P:tRNA processing"/>
    <property type="evidence" value="ECO:0007669"/>
    <property type="project" value="UniProtKB-KW"/>
</dbReference>
<dbReference type="HAMAP" id="MF_01390">
    <property type="entry name" value="MatK"/>
    <property type="match status" value="1"/>
</dbReference>
<dbReference type="InterPro" id="IPR024937">
    <property type="entry name" value="Domain_X"/>
</dbReference>
<dbReference type="InterPro" id="IPR002866">
    <property type="entry name" value="Maturase_MatK"/>
</dbReference>
<dbReference type="InterPro" id="IPR024942">
    <property type="entry name" value="Maturase_MatK_N"/>
</dbReference>
<dbReference type="PANTHER" id="PTHR34811">
    <property type="entry name" value="MATURASE K"/>
    <property type="match status" value="1"/>
</dbReference>
<dbReference type="PANTHER" id="PTHR34811:SF1">
    <property type="entry name" value="MATURASE K"/>
    <property type="match status" value="1"/>
</dbReference>
<dbReference type="Pfam" id="PF01348">
    <property type="entry name" value="Intron_maturas2"/>
    <property type="match status" value="1"/>
</dbReference>
<dbReference type="Pfam" id="PF01824">
    <property type="entry name" value="MatK_N"/>
    <property type="match status" value="1"/>
</dbReference>
<proteinExistence type="inferred from homology"/>
<gene>
    <name evidence="1" type="primary">matK</name>
</gene>
<comment type="function">
    <text evidence="1">Usually encoded in the trnK tRNA gene intron. Probably assists in splicing its own and other chloroplast group II introns.</text>
</comment>
<comment type="subcellular location">
    <subcellularLocation>
        <location>Plastid</location>
        <location>Chloroplast</location>
    </subcellularLocation>
</comment>
<comment type="similarity">
    <text evidence="1">Belongs to the intron maturase 2 family. MatK subfamily.</text>
</comment>
<comment type="sequence caution" evidence="2">
    <conflict type="erroneous initiation">
        <sequence resource="EMBL-CDS" id="AAK69128"/>
    </conflict>
</comment>
<geneLocation type="chloroplast"/>